<organismHost>
    <name type="scientific">Homo sapiens</name>
    <name type="common">Human</name>
    <dbReference type="NCBI Taxonomy" id="9606"/>
</organismHost>
<organism>
    <name type="scientific">Rubella virus (strain RA27/3 vaccine)</name>
    <name type="common">RUBV</name>
    <dbReference type="NCBI Taxonomy" id="11044"/>
    <lineage>
        <taxon>Viruses</taxon>
        <taxon>Riboviria</taxon>
        <taxon>Orthornavirae</taxon>
        <taxon>Kitrinoviricota</taxon>
        <taxon>Alsuviricetes</taxon>
        <taxon>Hepelivirales</taxon>
        <taxon>Matonaviridae</taxon>
        <taxon>Rubivirus</taxon>
        <taxon>Rubivirus rubellae</taxon>
    </lineage>
</organism>
<dbReference type="EC" id="3.4.22.-"/>
<dbReference type="EC" id="2.7.7.48" evidence="4"/>
<dbReference type="EC" id="3.6.1.15"/>
<dbReference type="EC" id="3.6.4.13"/>
<dbReference type="EMBL" id="L78917">
    <property type="protein sequence ID" value="AAB81187.1"/>
    <property type="molecule type" value="Genomic_RNA"/>
</dbReference>
<dbReference type="PDB" id="7FAV">
    <property type="method" value="X-ray"/>
    <property type="resolution" value="1.64 A"/>
    <property type="chains" value="A=1021-1301"/>
</dbReference>
<dbReference type="PDBsum" id="7FAV"/>
<dbReference type="SMR" id="O40955"/>
<dbReference type="IntAct" id="O40955">
    <property type="interactions" value="6"/>
</dbReference>
<dbReference type="MEROPS" id="C27.001"/>
<dbReference type="Proteomes" id="UP000007188">
    <property type="component" value="Genome"/>
</dbReference>
<dbReference type="GO" id="GO:0033644">
    <property type="term" value="C:host cell membrane"/>
    <property type="evidence" value="ECO:0007669"/>
    <property type="project" value="UniProtKB-SubCell"/>
</dbReference>
<dbReference type="GO" id="GO:0044220">
    <property type="term" value="C:host cell perinuclear region of cytoplasm"/>
    <property type="evidence" value="ECO:0007669"/>
    <property type="project" value="UniProtKB-SubCell"/>
</dbReference>
<dbReference type="GO" id="GO:0016020">
    <property type="term" value="C:membrane"/>
    <property type="evidence" value="ECO:0007669"/>
    <property type="project" value="UniProtKB-KW"/>
</dbReference>
<dbReference type="GO" id="GO:0005524">
    <property type="term" value="F:ATP binding"/>
    <property type="evidence" value="ECO:0007669"/>
    <property type="project" value="UniProtKB-KW"/>
</dbReference>
<dbReference type="GO" id="GO:0016887">
    <property type="term" value="F:ATP hydrolysis activity"/>
    <property type="evidence" value="ECO:0007669"/>
    <property type="project" value="RHEA"/>
</dbReference>
<dbReference type="GO" id="GO:0004197">
    <property type="term" value="F:cysteine-type endopeptidase activity"/>
    <property type="evidence" value="ECO:0007669"/>
    <property type="project" value="InterPro"/>
</dbReference>
<dbReference type="GO" id="GO:0046872">
    <property type="term" value="F:metal ion binding"/>
    <property type="evidence" value="ECO:0007669"/>
    <property type="project" value="UniProtKB-KW"/>
</dbReference>
<dbReference type="GO" id="GO:0008174">
    <property type="term" value="F:mRNA methyltransferase activity"/>
    <property type="evidence" value="ECO:0007669"/>
    <property type="project" value="InterPro"/>
</dbReference>
<dbReference type="GO" id="GO:0003723">
    <property type="term" value="F:RNA binding"/>
    <property type="evidence" value="ECO:0007669"/>
    <property type="project" value="InterPro"/>
</dbReference>
<dbReference type="GO" id="GO:0003724">
    <property type="term" value="F:RNA helicase activity"/>
    <property type="evidence" value="ECO:0007669"/>
    <property type="project" value="UniProtKB-EC"/>
</dbReference>
<dbReference type="GO" id="GO:0003968">
    <property type="term" value="F:RNA-directed RNA polymerase activity"/>
    <property type="evidence" value="ECO:0007669"/>
    <property type="project" value="UniProtKB-KW"/>
</dbReference>
<dbReference type="GO" id="GO:0006351">
    <property type="term" value="P:DNA-templated transcription"/>
    <property type="evidence" value="ECO:0007669"/>
    <property type="project" value="InterPro"/>
</dbReference>
<dbReference type="GO" id="GO:0016556">
    <property type="term" value="P:mRNA modification"/>
    <property type="evidence" value="ECO:0007669"/>
    <property type="project" value="InterPro"/>
</dbReference>
<dbReference type="GO" id="GO:0006508">
    <property type="term" value="P:proteolysis"/>
    <property type="evidence" value="ECO:0007669"/>
    <property type="project" value="UniProtKB-KW"/>
</dbReference>
<dbReference type="GO" id="GO:0006396">
    <property type="term" value="P:RNA processing"/>
    <property type="evidence" value="ECO:0007669"/>
    <property type="project" value="InterPro"/>
</dbReference>
<dbReference type="GO" id="GO:0039694">
    <property type="term" value="P:viral RNA genome replication"/>
    <property type="evidence" value="ECO:0007669"/>
    <property type="project" value="InterPro"/>
</dbReference>
<dbReference type="CDD" id="cd21557">
    <property type="entry name" value="Macro_X_Nsp3-like"/>
    <property type="match status" value="1"/>
</dbReference>
<dbReference type="CDD" id="cd23260">
    <property type="entry name" value="Matonaviridae_RdRp"/>
    <property type="match status" value="1"/>
</dbReference>
<dbReference type="Gene3D" id="3.40.220.10">
    <property type="entry name" value="Leucine Aminopeptidase, subunit E, domain 1"/>
    <property type="match status" value="1"/>
</dbReference>
<dbReference type="Gene3D" id="3.40.50.300">
    <property type="entry name" value="P-loop containing nucleotide triphosphate hydrolases"/>
    <property type="match status" value="1"/>
</dbReference>
<dbReference type="InterPro" id="IPR027351">
    <property type="entry name" value="(+)RNA_virus_helicase_core_dom"/>
</dbReference>
<dbReference type="InterPro" id="IPR002588">
    <property type="entry name" value="Alphavirus-like_MT_dom"/>
</dbReference>
<dbReference type="InterPro" id="IPR043502">
    <property type="entry name" value="DNA/RNA_pol_sf"/>
</dbReference>
<dbReference type="InterPro" id="IPR002589">
    <property type="entry name" value="Macro_dom"/>
</dbReference>
<dbReference type="InterPro" id="IPR043472">
    <property type="entry name" value="Macro_dom-like"/>
</dbReference>
<dbReference type="InterPro" id="IPR044371">
    <property type="entry name" value="Macro_X_NSP3-like"/>
</dbReference>
<dbReference type="InterPro" id="IPR047306">
    <property type="entry name" value="Matonaviridae_RdRp"/>
</dbReference>
<dbReference type="InterPro" id="IPR027417">
    <property type="entry name" value="P-loop_NTPase"/>
</dbReference>
<dbReference type="InterPro" id="IPR008738">
    <property type="entry name" value="Peptidase_C27"/>
</dbReference>
<dbReference type="InterPro" id="IPR001788">
    <property type="entry name" value="RNA-dep_RNA_pol_alsuvir"/>
</dbReference>
<dbReference type="InterPro" id="IPR007094">
    <property type="entry name" value="RNA-dir_pol_PSvirus"/>
</dbReference>
<dbReference type="InterPro" id="IPR022245">
    <property type="entry name" value="Rubi_NSP_C"/>
</dbReference>
<dbReference type="InterPro" id="IPR044070">
    <property type="entry name" value="RUBV_NS_PRO"/>
</dbReference>
<dbReference type="PANTHER" id="PTHR11106">
    <property type="entry name" value="GANGLIOSIDE INDUCED DIFFERENTIATION ASSOCIATED PROTEIN 2-RELATED"/>
    <property type="match status" value="1"/>
</dbReference>
<dbReference type="PANTHER" id="PTHR11106:SF27">
    <property type="entry name" value="MACRO DOMAIN-CONTAINING PROTEIN"/>
    <property type="match status" value="1"/>
</dbReference>
<dbReference type="Pfam" id="PF01661">
    <property type="entry name" value="Macro"/>
    <property type="match status" value="1"/>
</dbReference>
<dbReference type="Pfam" id="PF05407">
    <property type="entry name" value="Peptidase_C27"/>
    <property type="match status" value="1"/>
</dbReference>
<dbReference type="Pfam" id="PF00978">
    <property type="entry name" value="RdRP_2"/>
    <property type="match status" value="1"/>
</dbReference>
<dbReference type="Pfam" id="PF12601">
    <property type="entry name" value="Rubi_NSP_C"/>
    <property type="match status" value="1"/>
</dbReference>
<dbReference type="Pfam" id="PF01443">
    <property type="entry name" value="Viral_helicase1"/>
    <property type="match status" value="1"/>
</dbReference>
<dbReference type="SMART" id="SM00506">
    <property type="entry name" value="A1pp"/>
    <property type="match status" value="1"/>
</dbReference>
<dbReference type="SUPFAM" id="SSF56672">
    <property type="entry name" value="DNA/RNA polymerases"/>
    <property type="match status" value="1"/>
</dbReference>
<dbReference type="SUPFAM" id="SSF52949">
    <property type="entry name" value="Macro domain-like"/>
    <property type="match status" value="1"/>
</dbReference>
<dbReference type="SUPFAM" id="SSF52540">
    <property type="entry name" value="P-loop containing nucleoside triphosphate hydrolases"/>
    <property type="match status" value="1"/>
</dbReference>
<dbReference type="PROSITE" id="PS51743">
    <property type="entry name" value="ALPHAVIRUS_MT"/>
    <property type="match status" value="1"/>
</dbReference>
<dbReference type="PROSITE" id="PS51154">
    <property type="entry name" value="MACRO"/>
    <property type="match status" value="1"/>
</dbReference>
<dbReference type="PROSITE" id="PS51657">
    <property type="entry name" value="PSRV_HELICASE"/>
    <property type="match status" value="1"/>
</dbReference>
<dbReference type="PROSITE" id="PS50507">
    <property type="entry name" value="RDRP_SSRNA_POS"/>
    <property type="match status" value="1"/>
</dbReference>
<dbReference type="PROSITE" id="PS51889">
    <property type="entry name" value="RUBV_NS_PRO"/>
    <property type="match status" value="1"/>
</dbReference>
<comment type="function">
    <molecule>Non-structural polyprotein p200</molecule>
    <text evidence="2">Probable principal replicase for the negative-strand DNA, which replicates the 40S (+) genomic RNA into (-) antigenomic RNA. It cannot replicate the (-) into (+) until cleaved into p150 and p90 mature proteins.</text>
</comment>
<comment type="function">
    <molecule>Protease/methyltransferase p150</molecule>
    <text evidence="2">Protease that cleaves the precursor polyprotein into two mature products. Together with RNA-directed RNA polymerase p90, replicates the 40S genomic and antigenomic RNA by recognizing replications specific signals. The heterodimer P150/p90 is probably the principal replicase for positive-strand genomic RNA and the 24S subgenomic RNA, which codes for structural proteins. Responsible for the mRNA-capping of the viral mRNAs. This function is necessary since all viral RNAs are synthesized in the cytoplasm, and host capping enzymes are restricted to the nucleus. Forms fibers late in the infection that may be involved in cell-to-cell spread of the virus RNA in the absence of virus particle formation.</text>
</comment>
<comment type="function">
    <molecule>RNA-directed RNA polymerase p90</molecule>
    <text evidence="2">Together with protease/methyltransferase p150, replicates the 40S genomic and antigenomic RNA by recognizing replications specific signals. The heterodimer P150/p90 is probably the principal replicase for positive-strand genomic RNA and the 24S subgenomic RNA, which codes for structural proteins. A helicase activity is probably also present.</text>
</comment>
<comment type="catalytic activity">
    <reaction evidence="2 4">
        <text>RNA(n) + a ribonucleoside 5'-triphosphate = RNA(n+1) + diphosphate</text>
        <dbReference type="Rhea" id="RHEA:21248"/>
        <dbReference type="Rhea" id="RHEA-COMP:14527"/>
        <dbReference type="Rhea" id="RHEA-COMP:17342"/>
        <dbReference type="ChEBI" id="CHEBI:33019"/>
        <dbReference type="ChEBI" id="CHEBI:61557"/>
        <dbReference type="ChEBI" id="CHEBI:140395"/>
        <dbReference type="EC" id="2.7.7.48"/>
    </reaction>
</comment>
<comment type="catalytic activity">
    <reaction evidence="2">
        <text>a ribonucleoside 5'-triphosphate + H2O = a ribonucleoside 5'-diphosphate + phosphate + H(+)</text>
        <dbReference type="Rhea" id="RHEA:23680"/>
        <dbReference type="ChEBI" id="CHEBI:15377"/>
        <dbReference type="ChEBI" id="CHEBI:15378"/>
        <dbReference type="ChEBI" id="CHEBI:43474"/>
        <dbReference type="ChEBI" id="CHEBI:57930"/>
        <dbReference type="ChEBI" id="CHEBI:61557"/>
        <dbReference type="EC" id="3.6.1.15"/>
    </reaction>
</comment>
<comment type="catalytic activity">
    <reaction evidence="2">
        <text>ATP + H2O = ADP + phosphate + H(+)</text>
        <dbReference type="Rhea" id="RHEA:13065"/>
        <dbReference type="ChEBI" id="CHEBI:15377"/>
        <dbReference type="ChEBI" id="CHEBI:15378"/>
        <dbReference type="ChEBI" id="CHEBI:30616"/>
        <dbReference type="ChEBI" id="CHEBI:43474"/>
        <dbReference type="ChEBI" id="CHEBI:456216"/>
        <dbReference type="EC" id="3.6.4.13"/>
    </reaction>
</comment>
<comment type="cofactor">
    <cofactor evidence="7">
        <name>Zn(2+)</name>
        <dbReference type="ChEBI" id="CHEBI:29105"/>
    </cofactor>
    <text evidence="7">Zn(2+) is necessary for the protease activity. The protease can also function efficiently with Cd(2+) and Co(2+).</text>
</comment>
<comment type="subunit">
    <molecule>Protease/methyltransferase p150</molecule>
    <text evidence="2">Interacts with RNA-directed RNA polymerase p90. Interacts with host CALM1; this interaction is necessary for the protease activity and viral infectivity. Interacts with host C1QBP. Interacts with the capsid protein.</text>
</comment>
<comment type="subunit">
    <molecule>RNA-directed RNA polymerase p90</molecule>
    <text evidence="2">Interacts with human RB1/retinoblastoma protein. Interacts with protease/methyltransferase p150.</text>
</comment>
<comment type="interaction">
    <interactant intactId="EBI-6383633">
        <id>PRO_0000240177</id>
    </interactant>
    <interactant intactId="EBI-347528">
        <id>Q07021</id>
        <label>C1QBP</label>
    </interactant>
    <organismsDiffer>true</organismsDiffer>
    <experiments>2</experiments>
</comment>
<comment type="interaction">
    <interactant intactId="EBI-6383633">
        <id>PRO_0000240177</id>
    </interactant>
    <interactant intactId="EBI-6375765">
        <id>Q9MZE0</id>
        <label>C1QBP</label>
    </interactant>
    <organismsDiffer>true</organismsDiffer>
    <experiments>5</experiments>
</comment>
<comment type="subcellular location">
    <molecule>Non-structural polyprotein p200</molecule>
    <subcellularLocation>
        <location evidence="2">Host membrane</location>
    </subcellularLocation>
    <subcellularLocation>
        <location evidence="2">Host cytoplasm</location>
        <location evidence="2">Host perinuclear region</location>
    </subcellularLocation>
    <subcellularLocation>
        <location evidence="2">Host cytoplasm</location>
    </subcellularLocation>
    <text evidence="2">Localizes to cytoplasmic foci at 24 hpi.</text>
</comment>
<comment type="subcellular location">
    <molecule>Protease/methyltransferase p150</molecule>
    <subcellularLocation>
        <location evidence="2">Host membrane</location>
    </subcellularLocation>
    <subcellularLocation>
        <location evidence="2">Host cytoplasm</location>
        <location evidence="2">Host perinuclear region</location>
    </subcellularLocation>
    <subcellularLocation>
        <location evidence="2">Host cytoplasm</location>
    </subcellularLocation>
    <text evidence="1 2">At 36 hpi, localizes to the host cytoplasm, probably in vesicles inside host vacuoles of endosomal and lysosomal origin (By similarity). At 72 hpi, localizes to filamentous structures in the host cytoplasm (By similarity).</text>
</comment>
<comment type="subcellular location">
    <molecule>RNA-directed RNA polymerase p90</molecule>
    <subcellularLocation>
        <location evidence="2">Host membrane</location>
    </subcellularLocation>
    <subcellularLocation>
        <location evidence="2">Host cytoplasm</location>
    </subcellularLocation>
    <text evidence="2">Localizes to the cytoplasm and to the cytoplasmic fibers formed by protease/methyltransferase p150.</text>
</comment>
<comment type="domain">
    <molecule>Protease/methyltransferase p150</molecule>
    <text evidence="2">The N-terminus has a methyltransferase activity for mRNA-capping. The C-terminus harbors a protease active in cis or in trans which specifically cleaves and releases the two mature proteins. Both the N-terminus and C-terminus are required for fiber formation. The N-terminus is involved in associating with membranes. An EF-hand Ca(2+)-binding motif is present in the protease. Also contains 3 SH3-binding motifs that are responsible for the interaction with host C1QBP.</text>
</comment>
<comment type="PTM">
    <molecule>Non-structural polyprotein p200</molecule>
    <text evidence="2">Specific enzymatic cleavage by its own cysteine protease yield mature proteins p150 and p90.</text>
</comment>
<comment type="miscellaneous">
    <text evidence="2">Rubella virus in utero infection has frequently severe consequences on normal fetal development, collectively known as congenital rubella syndrome (CRS). The teratogenicity of the virus is possibly due to the interaction between the p90 protein and the human RB1/retinoblastoma protein.</text>
</comment>
<evidence type="ECO:0000250" key="1">
    <source>
        <dbReference type="UniProtKB" id="P13889"/>
    </source>
</evidence>
<evidence type="ECO:0000250" key="2">
    <source>
        <dbReference type="UniProtKB" id="Q86500"/>
    </source>
</evidence>
<evidence type="ECO:0000255" key="3">
    <source>
        <dbReference type="PROSITE-ProRule" id="PRU00490"/>
    </source>
</evidence>
<evidence type="ECO:0000255" key="4">
    <source>
        <dbReference type="PROSITE-ProRule" id="PRU00539"/>
    </source>
</evidence>
<evidence type="ECO:0000255" key="5">
    <source>
        <dbReference type="PROSITE-ProRule" id="PRU00990"/>
    </source>
</evidence>
<evidence type="ECO:0000255" key="6">
    <source>
        <dbReference type="PROSITE-ProRule" id="PRU01079"/>
    </source>
</evidence>
<evidence type="ECO:0000255" key="7">
    <source>
        <dbReference type="PROSITE-ProRule" id="PRU01237"/>
    </source>
</evidence>
<evidence type="ECO:0000256" key="8">
    <source>
        <dbReference type="SAM" id="MobiDB-lite"/>
    </source>
</evidence>
<evidence type="ECO:0007829" key="9">
    <source>
        <dbReference type="PDB" id="7FAV"/>
    </source>
</evidence>
<feature type="chain" id="PRO_0000240176" description="Non-structural polyprotein p200">
    <location>
        <begin position="1"/>
        <end position="2116"/>
    </location>
</feature>
<feature type="chain" id="PRO_0000240177" description="Protease/methyltransferase p150">
    <location>
        <begin position="1"/>
        <end position="1301"/>
    </location>
</feature>
<feature type="chain" id="PRO_0000240178" description="RNA-directed RNA polymerase p90">
    <location>
        <begin position="1302"/>
        <end position="2116"/>
    </location>
</feature>
<feature type="domain" description="Alphavirus-like MT" evidence="6">
    <location>
        <begin position="57"/>
        <end position="247"/>
    </location>
</feature>
<feature type="domain" description="Macro" evidence="3">
    <location>
        <begin position="806"/>
        <end position="985"/>
    </location>
</feature>
<feature type="domain" description="Peptidase C27" evidence="7">
    <location>
        <begin position="1000"/>
        <end position="1301"/>
    </location>
</feature>
<feature type="domain" description="(+)RNA virus helicase ATP-binding" evidence="5">
    <location>
        <begin position="1320"/>
        <end position="1468"/>
    </location>
</feature>
<feature type="domain" description="(+)RNA virus helicase C-terminal" evidence="5">
    <location>
        <begin position="1469"/>
        <end position="1609"/>
    </location>
</feature>
<feature type="domain" description="RdRp catalytic" evidence="4">
    <location>
        <begin position="1870"/>
        <end position="1981"/>
    </location>
</feature>
<feature type="region of interest" description="Required for efficient proteolysis and P150-P90 interaction" evidence="2">
    <location>
        <begin position="36"/>
        <end position="49"/>
    </location>
</feature>
<feature type="region of interest" description="Disordered" evidence="8">
    <location>
        <begin position="712"/>
        <end position="782"/>
    </location>
</feature>
<feature type="region of interest" description="Disordered" evidence="8">
    <location>
        <begin position="992"/>
        <end position="1031"/>
    </location>
</feature>
<feature type="region of interest" description="Interaction with host CALM1" evidence="7">
    <location>
        <begin position="1152"/>
        <end position="1183"/>
    </location>
</feature>
<feature type="region of interest" description="EF-hand-like" evidence="7">
    <location>
        <begin position="1193"/>
        <end position="1228"/>
    </location>
</feature>
<feature type="region of interest" description="Involved in P150-P90 interaction" evidence="2">
    <location>
        <begin position="1700"/>
        <end position="1900"/>
    </location>
</feature>
<feature type="short sequence motif" description="PxxPxR; class II SH3-binding" evidence="2">
    <location>
        <begin position="727"/>
        <end position="732"/>
    </location>
</feature>
<feature type="short sequence motif" description="PxxPxR; class II SH3-binding" evidence="2">
    <location>
        <begin position="747"/>
        <end position="752"/>
    </location>
</feature>
<feature type="short sequence motif" description="PxxPxR; class II SH3-binding" evidence="2">
    <location>
        <begin position="761"/>
        <end position="766"/>
    </location>
</feature>
<feature type="short sequence motif" description="Human RB1 binding" evidence="2">
    <location>
        <begin position="1902"/>
        <end position="1906"/>
    </location>
</feature>
<feature type="compositionally biased region" description="Low complexity" evidence="8">
    <location>
        <begin position="712"/>
        <end position="723"/>
    </location>
</feature>
<feature type="compositionally biased region" description="Pro residues" evidence="8">
    <location>
        <begin position="745"/>
        <end position="775"/>
    </location>
</feature>
<feature type="active site" description="For cysteine protease activity" evidence="7">
    <location>
        <position position="1152"/>
    </location>
</feature>
<feature type="active site" description="For cysteine protease activity" evidence="7">
    <location>
        <position position="1273"/>
    </location>
</feature>
<feature type="binding site" evidence="7">
    <location>
        <position position="1175"/>
    </location>
    <ligand>
        <name>Zn(2+)</name>
        <dbReference type="ChEBI" id="CHEBI:29105"/>
    </ligand>
</feature>
<feature type="binding site" evidence="7">
    <location>
        <position position="1178"/>
    </location>
    <ligand>
        <name>Zn(2+)</name>
        <dbReference type="ChEBI" id="CHEBI:29105"/>
    </ligand>
</feature>
<feature type="binding site" evidence="7">
    <location>
        <position position="1227"/>
    </location>
    <ligand>
        <name>Zn(2+)</name>
        <dbReference type="ChEBI" id="CHEBI:29105"/>
    </ligand>
</feature>
<feature type="binding site" evidence="7">
    <location>
        <position position="1273"/>
    </location>
    <ligand>
        <name>Zn(2+)</name>
        <dbReference type="ChEBI" id="CHEBI:29105"/>
    </ligand>
</feature>
<feature type="binding site" evidence="5">
    <location>
        <begin position="1352"/>
        <end position="1359"/>
    </location>
    <ligand>
        <name>a ribonucleoside 5'-triphosphate</name>
        <dbReference type="ChEBI" id="CHEBI:61557"/>
    </ligand>
</feature>
<feature type="site" description="Cleavage; autocatalytic" evidence="7">
    <location>
        <begin position="1301"/>
        <end position="1302"/>
    </location>
</feature>
<feature type="strand" evidence="9">
    <location>
        <begin position="1033"/>
        <end position="1035"/>
    </location>
</feature>
<feature type="turn" evidence="9">
    <location>
        <begin position="1038"/>
        <end position="1040"/>
    </location>
</feature>
<feature type="strand" evidence="9">
    <location>
        <begin position="1051"/>
        <end position="1053"/>
    </location>
</feature>
<feature type="helix" evidence="9">
    <location>
        <begin position="1057"/>
        <end position="1062"/>
    </location>
</feature>
<feature type="helix" evidence="9">
    <location>
        <begin position="1063"/>
        <end position="1066"/>
    </location>
</feature>
<feature type="strand" evidence="9">
    <location>
        <begin position="1073"/>
        <end position="1075"/>
    </location>
</feature>
<feature type="helix" evidence="9">
    <location>
        <begin position="1078"/>
        <end position="1083"/>
    </location>
</feature>
<feature type="turn" evidence="9">
    <location>
        <begin position="1104"/>
        <end position="1109"/>
    </location>
</feature>
<feature type="helix" evidence="9">
    <location>
        <begin position="1124"/>
        <end position="1126"/>
    </location>
</feature>
<feature type="helix" evidence="9">
    <location>
        <begin position="1127"/>
        <end position="1134"/>
    </location>
</feature>
<feature type="strand" evidence="9">
    <location>
        <begin position="1146"/>
        <end position="1148"/>
    </location>
</feature>
<feature type="turn" evidence="9">
    <location>
        <begin position="1149"/>
        <end position="1151"/>
    </location>
</feature>
<feature type="helix" evidence="9">
    <location>
        <begin position="1152"/>
        <end position="1166"/>
    </location>
</feature>
<feature type="helix" evidence="9">
    <location>
        <begin position="1176"/>
        <end position="1186"/>
    </location>
</feature>
<feature type="helix" evidence="9">
    <location>
        <begin position="1190"/>
        <end position="1203"/>
    </location>
</feature>
<feature type="helix" evidence="9">
    <location>
        <begin position="1216"/>
        <end position="1220"/>
    </location>
</feature>
<feature type="turn" evidence="9">
    <location>
        <begin position="1226"/>
        <end position="1228"/>
    </location>
</feature>
<feature type="turn" evidence="9">
    <location>
        <begin position="1235"/>
        <end position="1237"/>
    </location>
</feature>
<feature type="strand" evidence="9">
    <location>
        <begin position="1243"/>
        <end position="1249"/>
    </location>
</feature>
<feature type="strand" evidence="9">
    <location>
        <begin position="1253"/>
        <end position="1266"/>
    </location>
</feature>
<feature type="strand" evidence="9">
    <location>
        <begin position="1269"/>
        <end position="1278"/>
    </location>
</feature>
<feature type="strand" evidence="9">
    <location>
        <begin position="1288"/>
        <end position="1296"/>
    </location>
</feature>
<name>POLN_RUBVR</name>
<reference key="1">
    <citation type="journal article" date="1997" name="Arch. Virol.">
        <title>Genomic sequence of the RA27/3 vaccine strain of rubella virus.</title>
        <authorList>
            <person name="Pugachev K.V."/>
            <person name="Abernathy E.S."/>
            <person name="Frey T.K."/>
        </authorList>
    </citation>
    <scope>NUCLEOTIDE SEQUENCE [GENOMIC RNA]</scope>
</reference>
<sequence>MERLLDEVLAPGGPYNLTVGSWVRDHVRSIVEGAWEVRDVVSAAQKRAIVAVIPRPVFTQMQVSDHPALHAISRYTRRHWIEWGPKEALHVLIDPSPGLLREVARVERRWVALCLHRTARKLATALAETASEAWHADYVCALRGAPSGPFYVHPEDVPHGGRAVADRCLLYYTPMQMCELMRTIDATLLVAVDLWPVALAAHVGDDWDDLGIAWHLDHDGGCPADCRGAGAGPTPGYTRPCTTRIYQVLPDTAHPGRLYRCGPRLWTRDCAVAELSWEVAQHCGHQARVRAVRCTLPIRHVRSLQPSARVRLPDLVHLAEVGRWRWFSLPRPVFQRMLSYCKTLSPDAYYSERVFKFKNALSHSITLAGNVLQEGWKGTCAEEDALCAYVAFRAWQSNARLAGIMKSAKRCAADSLSVAGWLDTIWGAIKRFFGSVPLAERMEEWEQDAAVAAFDRGPLEDGGRHLDTVQPPKSPPRPEIAATWIVHAASADRHCACAPRCDVPRERPSAPAGPPDDEALIPPWLFAEHRALRCREWDFEVLRARADTAAAPAPLAPRPARYPTVLYRHPAHHGPWLTLDEPGEADAALVLCDPLGQPLRGPERHFAAGAHMCAQARGLQAFVRVVPPPERPWADGGARAWAKFFRGCAWAQRLLGEPAVMHLPYTDGDVPQLIALALRTLAQQGAALALSVRDLPGGAAFDANAVTAAVRAGPGQSAATSSPPGDPPPPRCARRSQRHSDARGTPPPAPARDPPPPAPSPPAPPRAGDPVPPTSAGPADRARDAELEVAYEPSGPPTSTKADPDSDIVESYARAAGPVHLRVRDIMDPPPGCKVVVNAANEGLLAGSGVCGAIFANATAALAADCRRLAPCPTGEAVATPGHGCGYTHIIHAVAPRRPRDPAALEEGEALLERAYRSIVALAAARRWARVACPLLGAGVYGWSAAESLRAALAATRTEPAERVSLHICHPDRATLTHASVLVGAGLAARRVSPPPTEPLASCPAGDPGRPAQRSASPPATPLGDATAPEPRGCQGCELCRYTRVTNDRAYVNLWLERDRGATSWAMRIPEVVVYGPEHLATHFPLNHYSVLKPAEVRPPRGMCGSDMWRCRGWQGVPQVRCTPSNAHAALCRTGVPPRVSTRGGELDPNTCWLRAAANVAQAARACGAYTSAGCPRCAYGRALSEARTHKDFAALSQRWSASHADASSDGTGDPLDPLMETVGCACSRVWVGSEHEAPPDHLLVSLHRAPNGPWGVVLEVRARPEGGNPTGHFVCAVGGGPRRVSDRPHLWLAVPLSRGGGTCAATDEGLAQAYYDDLEVRRLGDDAMARAALASVQRPRKGPYNIRVWNMAAGAGKTTRILAAFTREDLYVCPTNALLHEIQAKLRARDIEIKNAATYERALTKPLAAYRRIYIDEAFTLGGEYCAFVASQTTAEVICVGDRDQCGPHYANNCRTPVPDRWPTERSRHTWRFPDCWAARLRAGLDYDIEGERTGTFACNLWDGRQVDLHLAFSRETVRRLHEAGIRAYTVREAQGMSVGTACIHVGRDGTDVALALTRDLAIVSLTRASDALYLHELEDGSLRAAGLSAFLDAGALAELKEVPAGIDRVVAVEQAPPPLPPADGIPEAQDVPPFCPRTLEELVFGRAGHPHYADLNRVTEGEREVRYMRISRHLLNKNHTEMPGTERVLSAVCAVRRYRAGEDGSTLRTAVARQHPRPFRQIPPPRVTAGVAQEWRMTYLRERIDLTDVYTQMGVAARELTDRYARRYPEIFAGMCTAQSLSVPAFLKATLKCVDAALGPRDTEDCHAAQGKAGLEIRAWAKEWVQVMSPHFRAIQKIIMRALRPQFLVAAGHTEPEVDAWWQAHYTTNAIEVDFTEFDMNQTLATRDVELEISAALLGLPCAEDYRALRAGSYCTLRELGSTETGCERTSGEPATLLHNTTVAMCMAMRMVPKGVRWAGIFQGDDMVIFLPEGARSAALKWTPAEVGLFGFHIPVKHVSTPTPSFCGHVGTAAGLFHDVMHQAIKVLCRRFDPDVLEEQQVALLDRLRGVYAALPDTVAANAAYYDYSAERVLAIVRELTAYARGRGLDHPATIGALEEIQTPYARANLHDAD</sequence>
<keyword id="KW-0002">3D-structure</keyword>
<keyword id="KW-0067">ATP-binding</keyword>
<keyword id="KW-0106">Calcium</keyword>
<keyword id="KW-0347">Helicase</keyword>
<keyword id="KW-1035">Host cytoplasm</keyword>
<keyword id="KW-1043">Host membrane</keyword>
<keyword id="KW-0378">Hydrolase</keyword>
<keyword id="KW-0472">Membrane</keyword>
<keyword id="KW-0479">Metal-binding</keyword>
<keyword id="KW-0547">Nucleotide-binding</keyword>
<keyword id="KW-0548">Nucleotidyltransferase</keyword>
<keyword id="KW-0645">Protease</keyword>
<keyword id="KW-0696">RNA-directed RNA polymerase</keyword>
<keyword id="KW-0788">Thiol protease</keyword>
<keyword id="KW-0808">Transferase</keyword>
<keyword id="KW-0693">Viral RNA replication</keyword>
<keyword id="KW-0862">Zinc</keyword>
<proteinExistence type="evidence at protein level"/>
<protein>
    <recommendedName>
        <fullName>Non-structural polyprotein p200</fullName>
        <shortName>p200</shortName>
    </recommendedName>
    <component>
        <recommendedName>
            <fullName>Protease/methyltransferase p150</fullName>
            <shortName>p150</shortName>
            <ecNumber>3.4.22.-</ecNumber>
        </recommendedName>
    </component>
    <component>
        <recommendedName>
            <fullName>RNA-directed RNA polymerase p90</fullName>
            <shortName>p90</shortName>
            <ecNumber evidence="4">2.7.7.48</ecNumber>
            <ecNumber>3.6.1.15</ecNumber>
            <ecNumber>3.6.4.13</ecNumber>
        </recommendedName>
    </component>
</protein>
<accession>O40955</accession>